<accession>A1SYV0</accession>
<comment type="function">
    <text evidence="1">Condensation of UDP-2,3-diacylglucosamine and 2,3-diacylglucosamine-1-phosphate to form lipid A disaccharide, a precursor of lipid A, a phosphorylated glycolipid that anchors the lipopolysaccharide to the outer membrane of the cell.</text>
</comment>
<comment type="catalytic activity">
    <reaction evidence="1">
        <text>a lipid X + a UDP-2-N,3-O-bis[(3R)-3-hydroxyacyl]-alpha-D-glucosamine = a lipid A disaccharide + UDP + H(+)</text>
        <dbReference type="Rhea" id="RHEA:67828"/>
        <dbReference type="ChEBI" id="CHEBI:15378"/>
        <dbReference type="ChEBI" id="CHEBI:58223"/>
        <dbReference type="ChEBI" id="CHEBI:137748"/>
        <dbReference type="ChEBI" id="CHEBI:176338"/>
        <dbReference type="ChEBI" id="CHEBI:176343"/>
        <dbReference type="EC" id="2.4.1.182"/>
    </reaction>
</comment>
<comment type="pathway">
    <text evidence="1">Bacterial outer membrane biogenesis; LPS lipid A biosynthesis.</text>
</comment>
<comment type="similarity">
    <text evidence="1">Belongs to the LpxB family.</text>
</comment>
<gene>
    <name evidence="1" type="primary">lpxB</name>
    <name type="ordered locus">Ping_2963</name>
</gene>
<evidence type="ECO:0000255" key="1">
    <source>
        <dbReference type="HAMAP-Rule" id="MF_00392"/>
    </source>
</evidence>
<sequence>MNKPLRIGLIAGEASGDILGEGLIKALKIHYPDAVFEGIAGPKMIAQGCTALHPLEALSVMGFVEVLGKLGSILRIRKSIINHFIANPPDIFIGIDAPDFNLTVELKLKQHNIKTIHYVSPSVWAWKQWRIHKIAKATDLVLAFLPFEKAFYDRFDVPCRFIGHTLADQLPLEPEKQQARQSLGLQADAKLLAILPGSRKAEVEILGPIFLQSAALISRQYPDYKFIVPMVNGARKKQLLEQQQQYAPDLPLQIFDGQASAVLQSADAVLLASGTAALEAMLAKVPMVVAYKVNLLTYVIAKALVKVKYTSLPNLIADKEIVKELSQYNCTVENIVAALQPLLGQDNHQMINTFIRLHKLIRCDADRQAAQAVVDVLNNKK</sequence>
<dbReference type="EC" id="2.4.1.182" evidence="1"/>
<dbReference type="EMBL" id="CP000510">
    <property type="protein sequence ID" value="ABM04665.1"/>
    <property type="molecule type" value="Genomic_DNA"/>
</dbReference>
<dbReference type="RefSeq" id="WP_011771219.1">
    <property type="nucleotide sequence ID" value="NC_008709.1"/>
</dbReference>
<dbReference type="SMR" id="A1SYV0"/>
<dbReference type="STRING" id="357804.Ping_2963"/>
<dbReference type="CAZy" id="GT19">
    <property type="family name" value="Glycosyltransferase Family 19"/>
</dbReference>
<dbReference type="KEGG" id="pin:Ping_2963"/>
<dbReference type="eggNOG" id="COG0763">
    <property type="taxonomic scope" value="Bacteria"/>
</dbReference>
<dbReference type="HOGENOM" id="CLU_036577_3_0_6"/>
<dbReference type="OrthoDB" id="9801642at2"/>
<dbReference type="UniPathway" id="UPA00973"/>
<dbReference type="Proteomes" id="UP000000639">
    <property type="component" value="Chromosome"/>
</dbReference>
<dbReference type="GO" id="GO:0016020">
    <property type="term" value="C:membrane"/>
    <property type="evidence" value="ECO:0007669"/>
    <property type="project" value="GOC"/>
</dbReference>
<dbReference type="GO" id="GO:0008915">
    <property type="term" value="F:lipid-A-disaccharide synthase activity"/>
    <property type="evidence" value="ECO:0007669"/>
    <property type="project" value="UniProtKB-UniRule"/>
</dbReference>
<dbReference type="GO" id="GO:0005543">
    <property type="term" value="F:phospholipid binding"/>
    <property type="evidence" value="ECO:0007669"/>
    <property type="project" value="TreeGrafter"/>
</dbReference>
<dbReference type="GO" id="GO:0009245">
    <property type="term" value="P:lipid A biosynthetic process"/>
    <property type="evidence" value="ECO:0007669"/>
    <property type="project" value="UniProtKB-UniRule"/>
</dbReference>
<dbReference type="CDD" id="cd01635">
    <property type="entry name" value="Glycosyltransferase_GTB-type"/>
    <property type="match status" value="1"/>
</dbReference>
<dbReference type="HAMAP" id="MF_00392">
    <property type="entry name" value="LpxB"/>
    <property type="match status" value="1"/>
</dbReference>
<dbReference type="InterPro" id="IPR003835">
    <property type="entry name" value="Glyco_trans_19"/>
</dbReference>
<dbReference type="NCBIfam" id="TIGR00215">
    <property type="entry name" value="lpxB"/>
    <property type="match status" value="1"/>
</dbReference>
<dbReference type="PANTHER" id="PTHR30372">
    <property type="entry name" value="LIPID-A-DISACCHARIDE SYNTHASE"/>
    <property type="match status" value="1"/>
</dbReference>
<dbReference type="PANTHER" id="PTHR30372:SF4">
    <property type="entry name" value="LIPID-A-DISACCHARIDE SYNTHASE, MITOCHONDRIAL-RELATED"/>
    <property type="match status" value="1"/>
</dbReference>
<dbReference type="Pfam" id="PF02684">
    <property type="entry name" value="LpxB"/>
    <property type="match status" value="1"/>
</dbReference>
<dbReference type="SUPFAM" id="SSF53756">
    <property type="entry name" value="UDP-Glycosyltransferase/glycogen phosphorylase"/>
    <property type="match status" value="1"/>
</dbReference>
<feature type="chain" id="PRO_1000060773" description="Lipid-A-disaccharide synthase">
    <location>
        <begin position="1"/>
        <end position="381"/>
    </location>
</feature>
<keyword id="KW-0328">Glycosyltransferase</keyword>
<keyword id="KW-0441">Lipid A biosynthesis</keyword>
<keyword id="KW-0444">Lipid biosynthesis</keyword>
<keyword id="KW-0443">Lipid metabolism</keyword>
<keyword id="KW-1185">Reference proteome</keyword>
<keyword id="KW-0808">Transferase</keyword>
<name>LPXB_PSYIN</name>
<reference key="1">
    <citation type="journal article" date="2008" name="BMC Genomics">
        <title>Genomics of an extreme psychrophile, Psychromonas ingrahamii.</title>
        <authorList>
            <person name="Riley M."/>
            <person name="Staley J.T."/>
            <person name="Danchin A."/>
            <person name="Wang T.Z."/>
            <person name="Brettin T.S."/>
            <person name="Hauser L.J."/>
            <person name="Land M.L."/>
            <person name="Thompson L.S."/>
        </authorList>
    </citation>
    <scope>NUCLEOTIDE SEQUENCE [LARGE SCALE GENOMIC DNA]</scope>
    <source>
        <strain>DSM 17664 / CCUG 51855 / 37</strain>
    </source>
</reference>
<proteinExistence type="inferred from homology"/>
<organism>
    <name type="scientific">Psychromonas ingrahamii (strain DSM 17664 / CCUG 51855 / 37)</name>
    <dbReference type="NCBI Taxonomy" id="357804"/>
    <lineage>
        <taxon>Bacteria</taxon>
        <taxon>Pseudomonadati</taxon>
        <taxon>Pseudomonadota</taxon>
        <taxon>Gammaproteobacteria</taxon>
        <taxon>Alteromonadales</taxon>
        <taxon>Psychromonadaceae</taxon>
        <taxon>Psychromonas</taxon>
    </lineage>
</organism>
<protein>
    <recommendedName>
        <fullName evidence="1">Lipid-A-disaccharide synthase</fullName>
        <ecNumber evidence="1">2.4.1.182</ecNumber>
    </recommendedName>
</protein>